<evidence type="ECO:0000255" key="1">
    <source>
        <dbReference type="HAMAP-Rule" id="MF_02004"/>
    </source>
</evidence>
<feature type="chain" id="PRO_0000224555" description="Valine--tRNA ligase">
    <location>
        <begin position="1"/>
        <end position="951"/>
    </location>
</feature>
<feature type="coiled-coil region" evidence="1">
    <location>
        <begin position="880"/>
        <end position="944"/>
    </location>
</feature>
<feature type="short sequence motif" description="'HIGH' region">
    <location>
        <begin position="42"/>
        <end position="52"/>
    </location>
</feature>
<feature type="short sequence motif" description="'KMSKS' region">
    <location>
        <begin position="554"/>
        <end position="558"/>
    </location>
</feature>
<feature type="binding site" evidence="1">
    <location>
        <position position="557"/>
    </location>
    <ligand>
        <name>ATP</name>
        <dbReference type="ChEBI" id="CHEBI:30616"/>
    </ligand>
</feature>
<reference key="1">
    <citation type="journal article" date="2005" name="Nucleic Acids Res.">
        <title>Genome dynamics and diversity of Shigella species, the etiologic agents of bacillary dysentery.</title>
        <authorList>
            <person name="Yang F."/>
            <person name="Yang J."/>
            <person name="Zhang X."/>
            <person name="Chen L."/>
            <person name="Jiang Y."/>
            <person name="Yan Y."/>
            <person name="Tang X."/>
            <person name="Wang J."/>
            <person name="Xiong Z."/>
            <person name="Dong J."/>
            <person name="Xue Y."/>
            <person name="Zhu Y."/>
            <person name="Xu X."/>
            <person name="Sun L."/>
            <person name="Chen S."/>
            <person name="Nie H."/>
            <person name="Peng J."/>
            <person name="Xu J."/>
            <person name="Wang Y."/>
            <person name="Yuan Z."/>
            <person name="Wen Y."/>
            <person name="Yao Z."/>
            <person name="Shen Y."/>
            <person name="Qiang B."/>
            <person name="Hou Y."/>
            <person name="Yu J."/>
            <person name="Jin Q."/>
        </authorList>
    </citation>
    <scope>NUCLEOTIDE SEQUENCE [LARGE SCALE GENOMIC DNA]</scope>
    <source>
        <strain>Sd197</strain>
    </source>
</reference>
<sequence>MEKTYNPQDIEQPLYEHWEKQGYFKPNGDESQESFCIMIPPPNVTGSLHMGHAFQQTIMDTMIRYQRMQGKNTLWQVGTDHAGIATQMVVERKIAAEEGKTRHDYGREAFIDKIWEWKAESGGTITRQMRRLGNSVDWERERFTMDEGLSNAVKEVFVRLYKEDLIYRGKRLVNWDPKLRTAISDLEVENRESKGSMWHIRYPLADGAKAADGKDYLVVATTRPETLLGDTGVAVNPEDPRYKDLIGKYVILPLVNRRIPIVGDEHAYMEKGTGCVKITPAHDFNDYEVGKRHALPMINILTFDGDIRESAQVFDTKGNESDVYSSEIPAEFQKLERFAARKAVVAAVDALGLLEEIKPHDLTVPYGDRGGVVIEPMLTDQWYVRADVLAKPAVEAVENGDIQFVPKQYENMYFSWMRDIQDWCISRQLWWGHRIPAWYDEAGNVYVGRNEEEVRKENNLGADVALRQDEDVLDTWFSSALWTFSTLGWPENTDALRQFHPSSVMVSGFDIIFFWIARMIMMTMHFIKDENGTPQVPFHTVYMTGLIRDDEGQKMSKSKGNVIDPLDMVDGISLPELLEKRTGNMMQPQLADKIRKRTEKQFPNGIEPHGTDALRFTLAALASTGRDINWDMKRLEGYRNFCNKLWNASRFVLMNTEGQDCGFNGGEMTLSLADRWILAEFNQTIKAYREALDSFRFDIAAGILYEFTWNQFCDWYLELTKPVMNGGTEAELRGTHHTLVTVLEGLLRLAHPIIPFITETIWQRVKVLCGITADTIMLQPFPQYDASQVDEAALADTEWLKQAIVAVRNIRAEMNIAPGKPLELLLRGCSADAERRVNENRGFLQTLARLESITVLPADDKGPVSVTKIIDGAELLIPMAGLINKEDELARLAKEVAKIEGEISRIENKLANEGFVARAPEAVIAKEREKLEGYAEAKAKLIEQQAVIAAL</sequence>
<gene>
    <name evidence="1" type="primary">valS</name>
    <name type="ordered locus">SDY_4282</name>
</gene>
<dbReference type="EC" id="6.1.1.9" evidence="1"/>
<dbReference type="EMBL" id="CP000034">
    <property type="protein sequence ID" value="ABB64182.1"/>
    <property type="molecule type" value="Genomic_DNA"/>
</dbReference>
<dbReference type="RefSeq" id="WP_000416361.1">
    <property type="nucleotide sequence ID" value="NC_007606.1"/>
</dbReference>
<dbReference type="RefSeq" id="YP_405673.1">
    <property type="nucleotide sequence ID" value="NC_007606.1"/>
</dbReference>
<dbReference type="SMR" id="Q328S3"/>
<dbReference type="STRING" id="300267.SDY_4282"/>
<dbReference type="EnsemblBacteria" id="ABB64182">
    <property type="protein sequence ID" value="ABB64182"/>
    <property type="gene ID" value="SDY_4282"/>
</dbReference>
<dbReference type="KEGG" id="sdy:SDY_4282"/>
<dbReference type="PATRIC" id="fig|300267.13.peg.5048"/>
<dbReference type="HOGENOM" id="CLU_001493_0_2_6"/>
<dbReference type="Proteomes" id="UP000002716">
    <property type="component" value="Chromosome"/>
</dbReference>
<dbReference type="GO" id="GO:0005829">
    <property type="term" value="C:cytosol"/>
    <property type="evidence" value="ECO:0007669"/>
    <property type="project" value="TreeGrafter"/>
</dbReference>
<dbReference type="GO" id="GO:0002161">
    <property type="term" value="F:aminoacyl-tRNA deacylase activity"/>
    <property type="evidence" value="ECO:0007669"/>
    <property type="project" value="InterPro"/>
</dbReference>
<dbReference type="GO" id="GO:0005524">
    <property type="term" value="F:ATP binding"/>
    <property type="evidence" value="ECO:0007669"/>
    <property type="project" value="UniProtKB-UniRule"/>
</dbReference>
<dbReference type="GO" id="GO:0004832">
    <property type="term" value="F:valine-tRNA ligase activity"/>
    <property type="evidence" value="ECO:0007669"/>
    <property type="project" value="UniProtKB-UniRule"/>
</dbReference>
<dbReference type="GO" id="GO:0006438">
    <property type="term" value="P:valyl-tRNA aminoacylation"/>
    <property type="evidence" value="ECO:0007669"/>
    <property type="project" value="UniProtKB-UniRule"/>
</dbReference>
<dbReference type="CDD" id="cd07962">
    <property type="entry name" value="Anticodon_Ia_Val"/>
    <property type="match status" value="1"/>
</dbReference>
<dbReference type="CDD" id="cd00817">
    <property type="entry name" value="ValRS_core"/>
    <property type="match status" value="1"/>
</dbReference>
<dbReference type="FunFam" id="1.10.287.380:FF:000001">
    <property type="entry name" value="Valine--tRNA ligase"/>
    <property type="match status" value="1"/>
</dbReference>
<dbReference type="FunFam" id="1.10.730.10:FF:000007">
    <property type="entry name" value="Valine--tRNA ligase"/>
    <property type="match status" value="1"/>
</dbReference>
<dbReference type="FunFam" id="3.40.50.620:FF:000032">
    <property type="entry name" value="Valine--tRNA ligase"/>
    <property type="match status" value="1"/>
</dbReference>
<dbReference type="FunFam" id="3.40.50.620:FF:000146">
    <property type="entry name" value="Valine--tRNA ligase"/>
    <property type="match status" value="1"/>
</dbReference>
<dbReference type="FunFam" id="3.90.740.10:FF:000021">
    <property type="entry name" value="Valine--tRNA ligase"/>
    <property type="match status" value="1"/>
</dbReference>
<dbReference type="Gene3D" id="3.40.50.620">
    <property type="entry name" value="HUPs"/>
    <property type="match status" value="2"/>
</dbReference>
<dbReference type="Gene3D" id="1.10.730.10">
    <property type="entry name" value="Isoleucyl-tRNA Synthetase, Domain 1"/>
    <property type="match status" value="1"/>
</dbReference>
<dbReference type="Gene3D" id="1.10.287.380">
    <property type="entry name" value="Valyl-tRNA synthetase, C-terminal domain"/>
    <property type="match status" value="1"/>
</dbReference>
<dbReference type="Gene3D" id="3.90.740.10">
    <property type="entry name" value="Valyl/Leucyl/Isoleucyl-tRNA synthetase, editing domain"/>
    <property type="match status" value="2"/>
</dbReference>
<dbReference type="HAMAP" id="MF_02004">
    <property type="entry name" value="Val_tRNA_synth_type1"/>
    <property type="match status" value="1"/>
</dbReference>
<dbReference type="InterPro" id="IPR001412">
    <property type="entry name" value="aa-tRNA-synth_I_CS"/>
</dbReference>
<dbReference type="InterPro" id="IPR002300">
    <property type="entry name" value="aa-tRNA-synth_Ia"/>
</dbReference>
<dbReference type="InterPro" id="IPR033705">
    <property type="entry name" value="Anticodon_Ia_Val"/>
</dbReference>
<dbReference type="InterPro" id="IPR013155">
    <property type="entry name" value="M/V/L/I-tRNA-synth_anticd-bd"/>
</dbReference>
<dbReference type="InterPro" id="IPR014729">
    <property type="entry name" value="Rossmann-like_a/b/a_fold"/>
</dbReference>
<dbReference type="InterPro" id="IPR010978">
    <property type="entry name" value="tRNA-bd_arm"/>
</dbReference>
<dbReference type="InterPro" id="IPR009080">
    <property type="entry name" value="tRNAsynth_Ia_anticodon-bd"/>
</dbReference>
<dbReference type="InterPro" id="IPR037118">
    <property type="entry name" value="Val-tRNA_synth_C_sf"/>
</dbReference>
<dbReference type="InterPro" id="IPR019499">
    <property type="entry name" value="Val-tRNA_synth_tRNA-bd"/>
</dbReference>
<dbReference type="InterPro" id="IPR009008">
    <property type="entry name" value="Val/Leu/Ile-tRNA-synth_edit"/>
</dbReference>
<dbReference type="InterPro" id="IPR002303">
    <property type="entry name" value="Valyl-tRNA_ligase"/>
</dbReference>
<dbReference type="NCBIfam" id="NF004349">
    <property type="entry name" value="PRK05729.1"/>
    <property type="match status" value="1"/>
</dbReference>
<dbReference type="NCBIfam" id="TIGR00422">
    <property type="entry name" value="valS"/>
    <property type="match status" value="1"/>
</dbReference>
<dbReference type="PANTHER" id="PTHR11946:SF93">
    <property type="entry name" value="VALINE--TRNA LIGASE, CHLOROPLASTIC_MITOCHONDRIAL 2"/>
    <property type="match status" value="1"/>
</dbReference>
<dbReference type="PANTHER" id="PTHR11946">
    <property type="entry name" value="VALYL-TRNA SYNTHETASES"/>
    <property type="match status" value="1"/>
</dbReference>
<dbReference type="Pfam" id="PF08264">
    <property type="entry name" value="Anticodon_1"/>
    <property type="match status" value="1"/>
</dbReference>
<dbReference type="Pfam" id="PF00133">
    <property type="entry name" value="tRNA-synt_1"/>
    <property type="match status" value="1"/>
</dbReference>
<dbReference type="Pfam" id="PF10458">
    <property type="entry name" value="Val_tRNA-synt_C"/>
    <property type="match status" value="1"/>
</dbReference>
<dbReference type="PRINTS" id="PR00986">
    <property type="entry name" value="TRNASYNTHVAL"/>
</dbReference>
<dbReference type="SUPFAM" id="SSF47323">
    <property type="entry name" value="Anticodon-binding domain of a subclass of class I aminoacyl-tRNA synthetases"/>
    <property type="match status" value="1"/>
</dbReference>
<dbReference type="SUPFAM" id="SSF52374">
    <property type="entry name" value="Nucleotidylyl transferase"/>
    <property type="match status" value="1"/>
</dbReference>
<dbReference type="SUPFAM" id="SSF46589">
    <property type="entry name" value="tRNA-binding arm"/>
    <property type="match status" value="1"/>
</dbReference>
<dbReference type="SUPFAM" id="SSF50677">
    <property type="entry name" value="ValRS/IleRS/LeuRS editing domain"/>
    <property type="match status" value="1"/>
</dbReference>
<dbReference type="PROSITE" id="PS00178">
    <property type="entry name" value="AA_TRNA_LIGASE_I"/>
    <property type="match status" value="1"/>
</dbReference>
<protein>
    <recommendedName>
        <fullName evidence="1">Valine--tRNA ligase</fullName>
        <ecNumber evidence="1">6.1.1.9</ecNumber>
    </recommendedName>
    <alternativeName>
        <fullName evidence="1">Valyl-tRNA synthetase</fullName>
        <shortName evidence="1">ValRS</shortName>
    </alternativeName>
</protein>
<accession>Q328S3</accession>
<organism>
    <name type="scientific">Shigella dysenteriae serotype 1 (strain Sd197)</name>
    <dbReference type="NCBI Taxonomy" id="300267"/>
    <lineage>
        <taxon>Bacteria</taxon>
        <taxon>Pseudomonadati</taxon>
        <taxon>Pseudomonadota</taxon>
        <taxon>Gammaproteobacteria</taxon>
        <taxon>Enterobacterales</taxon>
        <taxon>Enterobacteriaceae</taxon>
        <taxon>Shigella</taxon>
    </lineage>
</organism>
<comment type="function">
    <text evidence="1">Catalyzes the attachment of valine to tRNA(Val). As ValRS can inadvertently accommodate and process structurally similar amino acids such as threonine, to avoid such errors, it has a 'posttransfer' editing activity that hydrolyzes mischarged Thr-tRNA(Val) in a tRNA-dependent manner.</text>
</comment>
<comment type="catalytic activity">
    <reaction evidence="1">
        <text>tRNA(Val) + L-valine + ATP = L-valyl-tRNA(Val) + AMP + diphosphate</text>
        <dbReference type="Rhea" id="RHEA:10704"/>
        <dbReference type="Rhea" id="RHEA-COMP:9672"/>
        <dbReference type="Rhea" id="RHEA-COMP:9708"/>
        <dbReference type="ChEBI" id="CHEBI:30616"/>
        <dbReference type="ChEBI" id="CHEBI:33019"/>
        <dbReference type="ChEBI" id="CHEBI:57762"/>
        <dbReference type="ChEBI" id="CHEBI:78442"/>
        <dbReference type="ChEBI" id="CHEBI:78537"/>
        <dbReference type="ChEBI" id="CHEBI:456215"/>
        <dbReference type="EC" id="6.1.1.9"/>
    </reaction>
</comment>
<comment type="subunit">
    <text evidence="1">Monomer.</text>
</comment>
<comment type="subcellular location">
    <subcellularLocation>
        <location evidence="1">Cytoplasm</location>
    </subcellularLocation>
</comment>
<comment type="domain">
    <text evidence="1">ValRS has two distinct active sites: one for aminoacylation and one for editing. The misactivated threonine is translocated from the active site to the editing site.</text>
</comment>
<comment type="domain">
    <text evidence="1">The C-terminal coiled-coil domain is crucial for aminoacylation activity.</text>
</comment>
<comment type="similarity">
    <text evidence="1">Belongs to the class-I aminoacyl-tRNA synthetase family. ValS type 1 subfamily.</text>
</comment>
<name>SYV_SHIDS</name>
<keyword id="KW-0030">Aminoacyl-tRNA synthetase</keyword>
<keyword id="KW-0067">ATP-binding</keyword>
<keyword id="KW-0175">Coiled coil</keyword>
<keyword id="KW-0963">Cytoplasm</keyword>
<keyword id="KW-0436">Ligase</keyword>
<keyword id="KW-0547">Nucleotide-binding</keyword>
<keyword id="KW-0648">Protein biosynthesis</keyword>
<keyword id="KW-1185">Reference proteome</keyword>
<proteinExistence type="inferred from homology"/>